<keyword id="KW-0456">Lyase</keyword>
<keyword id="KW-0627">Porphyrin biosynthesis</keyword>
<keyword id="KW-1185">Reference proteome</keyword>
<reference key="1">
    <citation type="journal article" date="2001" name="Nature">
        <title>Complete genome sequence of Salmonella enterica serovar Typhimurium LT2.</title>
        <authorList>
            <person name="McClelland M."/>
            <person name="Sanderson K.E."/>
            <person name="Spieth J."/>
            <person name="Clifton S.W."/>
            <person name="Latreille P."/>
            <person name="Courtney L."/>
            <person name="Porwollik S."/>
            <person name="Ali J."/>
            <person name="Dante M."/>
            <person name="Du F."/>
            <person name="Hou S."/>
            <person name="Layman D."/>
            <person name="Leonard S."/>
            <person name="Nguyen C."/>
            <person name="Scott K."/>
            <person name="Holmes A."/>
            <person name="Grewal N."/>
            <person name="Mulvaney E."/>
            <person name="Ryan E."/>
            <person name="Sun H."/>
            <person name="Florea L."/>
            <person name="Miller W."/>
            <person name="Stoneking T."/>
            <person name="Nhan M."/>
            <person name="Waterston R."/>
            <person name="Wilson R.K."/>
        </authorList>
    </citation>
    <scope>NUCLEOTIDE SEQUENCE [LARGE SCALE GENOMIC DNA]</scope>
    <source>
        <strain>LT2 / SGSC1412 / ATCC 700720</strain>
    </source>
</reference>
<feature type="chain" id="PRO_0000135246" description="Uroporphyrinogen-III synthase">
    <location>
        <begin position="1"/>
        <end position="246"/>
    </location>
</feature>
<name>HEM4_SALTY</name>
<proteinExistence type="inferred from homology"/>
<accession>Q9L6Q3</accession>
<comment type="function">
    <text evidence="1">Catalyzes cyclization of the linear tetrapyrrole, hydroxymethylbilane, to the macrocyclic uroporphyrinogen III.</text>
</comment>
<comment type="catalytic activity">
    <reaction>
        <text>hydroxymethylbilane = uroporphyrinogen III + H2O</text>
        <dbReference type="Rhea" id="RHEA:18965"/>
        <dbReference type="ChEBI" id="CHEBI:15377"/>
        <dbReference type="ChEBI" id="CHEBI:57308"/>
        <dbReference type="ChEBI" id="CHEBI:57845"/>
        <dbReference type="EC" id="4.2.1.75"/>
    </reaction>
</comment>
<comment type="pathway">
    <text>Porphyrin-containing compound metabolism; protoporphyrin-IX biosynthesis; coproporphyrinogen-III from 5-aminolevulinate: step 3/4.</text>
</comment>
<comment type="subunit">
    <text evidence="1">Monomer.</text>
</comment>
<comment type="similarity">
    <text evidence="2">Belongs to the uroporphyrinogen-III synthase family.</text>
</comment>
<organism>
    <name type="scientific">Salmonella typhimurium (strain LT2 / SGSC1412 / ATCC 700720)</name>
    <dbReference type="NCBI Taxonomy" id="99287"/>
    <lineage>
        <taxon>Bacteria</taxon>
        <taxon>Pseudomonadati</taxon>
        <taxon>Pseudomonadota</taxon>
        <taxon>Gammaproteobacteria</taxon>
        <taxon>Enterobacterales</taxon>
        <taxon>Enterobacteriaceae</taxon>
        <taxon>Salmonella</taxon>
    </lineage>
</organism>
<protein>
    <recommendedName>
        <fullName>Uroporphyrinogen-III synthase</fullName>
        <shortName>UROS</shortName>
        <ecNumber>4.2.1.75</ecNumber>
    </recommendedName>
    <alternativeName>
        <fullName>Hydroxymethylbilane hydrolyase [cyclizing]</fullName>
    </alternativeName>
    <alternativeName>
        <fullName>Uroporphyrinogen-III cosynthase</fullName>
    </alternativeName>
</protein>
<sequence length="246" mass="27662">MSILITRPSPAGEALVSRLRALGQVAWSFPLIEFVAGRELPTLADRLATLTENDLVFALSQHAVAFAHAQLQRDGRNWPVAPRYFAIGRTTALALHTVSGFDIRYPLDREISEALLQLPELQNIAGKRALILRGNGGRELLGETLTARGAEVSFCECYQRCAKHYDGAEEAMRWHTRGVTTLVVTSGEMLQRLWSLTPQWYREHWLLRCRLLVVSERLAHLARELGWQDIKVADNADNDALLRALQ</sequence>
<gene>
    <name type="primary">hemD</name>
    <name type="ordered locus">STM3937</name>
    <name type="ORF">STMD1.54</name>
</gene>
<dbReference type="EC" id="4.2.1.75"/>
<dbReference type="EMBL" id="AF233324">
    <property type="protein sequence ID" value="AAF33454.1"/>
    <property type="molecule type" value="Genomic_DNA"/>
</dbReference>
<dbReference type="EMBL" id="AE006468">
    <property type="protein sequence ID" value="AAL22782.1"/>
    <property type="molecule type" value="Genomic_DNA"/>
</dbReference>
<dbReference type="RefSeq" id="NP_462823.1">
    <property type="nucleotide sequence ID" value="NC_003197.2"/>
</dbReference>
<dbReference type="RefSeq" id="WP_000025498.1">
    <property type="nucleotide sequence ID" value="NC_003197.2"/>
</dbReference>
<dbReference type="SMR" id="Q9L6Q3"/>
<dbReference type="STRING" id="99287.STM3937"/>
<dbReference type="PaxDb" id="99287-STM3937"/>
<dbReference type="DNASU" id="1255463"/>
<dbReference type="GeneID" id="1255463"/>
<dbReference type="KEGG" id="stm:STM3937"/>
<dbReference type="PATRIC" id="fig|99287.12.peg.4154"/>
<dbReference type="HOGENOM" id="CLU_011276_9_4_6"/>
<dbReference type="OMA" id="VRYWEVY"/>
<dbReference type="PhylomeDB" id="Q9L6Q3"/>
<dbReference type="BioCyc" id="SENT99287:STM3937-MONOMER"/>
<dbReference type="UniPathway" id="UPA00251">
    <property type="reaction ID" value="UER00320"/>
</dbReference>
<dbReference type="Proteomes" id="UP000001014">
    <property type="component" value="Chromosome"/>
</dbReference>
<dbReference type="GO" id="GO:0004852">
    <property type="term" value="F:uroporphyrinogen-III synthase activity"/>
    <property type="evidence" value="ECO:0007669"/>
    <property type="project" value="UniProtKB-EC"/>
</dbReference>
<dbReference type="GO" id="GO:0006782">
    <property type="term" value="P:protoporphyrinogen IX biosynthetic process"/>
    <property type="evidence" value="ECO:0007669"/>
    <property type="project" value="UniProtKB-UniPathway"/>
</dbReference>
<dbReference type="GO" id="GO:0006780">
    <property type="term" value="P:uroporphyrinogen III biosynthetic process"/>
    <property type="evidence" value="ECO:0007669"/>
    <property type="project" value="InterPro"/>
</dbReference>
<dbReference type="CDD" id="cd06578">
    <property type="entry name" value="HemD"/>
    <property type="match status" value="1"/>
</dbReference>
<dbReference type="Gene3D" id="3.40.50.10090">
    <property type="match status" value="2"/>
</dbReference>
<dbReference type="InterPro" id="IPR036108">
    <property type="entry name" value="4pyrrol_syn_uPrphyn_synt_sf"/>
</dbReference>
<dbReference type="InterPro" id="IPR003754">
    <property type="entry name" value="4pyrrol_synth_uPrphyn_synth"/>
</dbReference>
<dbReference type="InterPro" id="IPR039793">
    <property type="entry name" value="UROS/Hem4"/>
</dbReference>
<dbReference type="NCBIfam" id="NF004582">
    <property type="entry name" value="PRK05928.1-1"/>
    <property type="match status" value="1"/>
</dbReference>
<dbReference type="PANTHER" id="PTHR38042">
    <property type="entry name" value="UROPORPHYRINOGEN-III SYNTHASE, CHLOROPLASTIC"/>
    <property type="match status" value="1"/>
</dbReference>
<dbReference type="PANTHER" id="PTHR38042:SF1">
    <property type="entry name" value="UROPORPHYRINOGEN-III SYNTHASE, CHLOROPLASTIC"/>
    <property type="match status" value="1"/>
</dbReference>
<dbReference type="Pfam" id="PF02602">
    <property type="entry name" value="HEM4"/>
    <property type="match status" value="1"/>
</dbReference>
<dbReference type="SUPFAM" id="SSF69618">
    <property type="entry name" value="HemD-like"/>
    <property type="match status" value="1"/>
</dbReference>
<evidence type="ECO:0000250" key="1"/>
<evidence type="ECO:0000305" key="2"/>